<organism>
    <name type="scientific">Streptococcus gordonii</name>
    <dbReference type="NCBI Taxonomy" id="1302"/>
    <lineage>
        <taxon>Bacteria</taxon>
        <taxon>Bacillati</taxon>
        <taxon>Bacillota</taxon>
        <taxon>Bacilli</taxon>
        <taxon>Lactobacillales</taxon>
        <taxon>Streptococcaceae</taxon>
        <taxon>Streptococcus</taxon>
    </lineage>
</organism>
<protein>
    <recommendedName>
        <fullName>Xaa-Pro dipeptidyl-peptidase</fullName>
        <ecNumber>3.4.14.11</ecNumber>
    </recommendedName>
    <alternativeName>
        <fullName>Sg-xPDPP</fullName>
    </alternativeName>
    <alternativeName>
        <fullName>X-Pro dipeptidyl-peptidase</fullName>
    </alternativeName>
    <alternativeName>
        <fullName>X-prolyl-dipeptidyl aminopeptidase</fullName>
        <shortName>X-PDAP</shortName>
    </alternativeName>
</protein>
<accession>Q93M42</accession>
<keyword id="KW-0031">Aminopeptidase</keyword>
<keyword id="KW-0378">Hydrolase</keyword>
<keyword id="KW-0645">Protease</keyword>
<keyword id="KW-0964">Secreted</keyword>
<keyword id="KW-0720">Serine protease</keyword>
<feature type="chain" id="PRO_0000220226" description="Xaa-Pro dipeptidyl-peptidase">
    <location>
        <begin position="1"/>
        <end position="759"/>
    </location>
</feature>
<feature type="active site" description="Charge relay system" evidence="1">
    <location>
        <position position="347"/>
    </location>
</feature>
<feature type="active site" description="Charge relay system" evidence="1">
    <location>
        <position position="467"/>
    </location>
</feature>
<feature type="active site" description="Charge relay system" evidence="1">
    <location>
        <position position="497"/>
    </location>
</feature>
<reference key="1">
    <citation type="journal article" date="2001" name="Infect. Immun.">
        <title>Novel extracellular x-prolyl dipeptidyl-peptidase (DPP) from Streptococcus gordonii FSS2: an emerging subfamily of viridans Streptococcal x-prolyl DPPs.</title>
        <authorList>
            <person name="Goldstein J.M."/>
            <person name="Banbula A."/>
            <person name="Kordula T."/>
            <person name="Mayo J.A."/>
            <person name="Travis J."/>
        </authorList>
    </citation>
    <scope>NUCLEOTIDE SEQUENCE [GENOMIC DNA]</scope>
    <scope>CHARACTERIZATION</scope>
    <source>
        <strain>FSS2</strain>
    </source>
</reference>
<gene>
    <name type="primary">pepX</name>
</gene>
<name>PEPX_STRGN</name>
<proteinExistence type="evidence at protein level"/>
<comment type="function">
    <text>Removes N-terminal dipeptides sequentially from polypeptides having unsubstituted N-termini provided that the penultimate residue is proline.</text>
</comment>
<comment type="catalytic activity">
    <reaction>
        <text>Hydrolyzes Xaa-Pro-|- bonds to release unblocked, N-terminal dipeptides from substrates including Ala-Pro-|-p-nitroanilide and (sequentially) Tyr-Pro-|-Phe-Pro-|-Gly-Pro-|-Ile.</text>
        <dbReference type="EC" id="3.4.14.11"/>
    </reaction>
</comment>
<comment type="subunit">
    <text>Homodimer.</text>
</comment>
<comment type="subcellular location">
    <subcellularLocation>
        <location>Secreted</location>
    </subcellularLocation>
</comment>
<comment type="similarity">
    <text evidence="2">Belongs to the peptidase S15 family.</text>
</comment>
<evidence type="ECO:0000250" key="1"/>
<evidence type="ECO:0000305" key="2"/>
<sequence>MRYNQYSYTKASEEVMLDELARLGFTIQTTNSPKENLHHFLQKILFRYQDVNYVLSSWVADQKTDLLTFFQSDKQLTEEVFYTVALQVLGFAPFVDFDDVTAFCKEIHFPITYGNILENLYQLLNTRTKLGNTLIDQLVSEGFIPESNDYHFFNGKSLATFSSHEAIREVVYVESRVDTDGDGKPDLVKVSIIRPSYEGQVPAVMTASPYHQGTNDKASDKALHNMNVDLSCKNPRTITVQESSIQTIEPQGQASLVEKAEEKLGHIGSYTLNDYLLPRGFANLYVSGVGTKDSEGMMTSGDYQQIEAYKNVIDWLNGRCRAFTDHTRQREIKATWSNGKVATTGISYLGTMSNGLATTGVDGLEVIIAEAGISSWYNYYRENGLVTSPGGYPGEDFESLTELTYSRNLLAGEYLRHNQAYQAYLDQQRKDLERETGDYNQFWHDRNYLIHADKVKAEVVFTHGSQDWNVKPLHVYNMFHALPAHIKKHLFFHNGAHVYINNWQSIDFRESMNALLSKKLLGHSSDFDLPPVIWQDNSQAQNWMSLDDFGNQEDYSHFHLGKGSQEIRNRYSDEDYNRFAKSYQVFKNELFEGKTQQITLDWTLEQDLFINGPAKLKLRLKSSTNKGLISAQLLDYGPAKRLTPIPSLLEPRVMDNGRYYMLDNLMELPFADTPHRVITKGFLNLQNRTDLLTVEEVVPNQWMELSFELQPTIYKLKKGDQLRLVLYTTDFEHTVRDKTDYHLSVDMEHSSLSLPHKKS</sequence>
<dbReference type="EC" id="3.4.14.11"/>
<dbReference type="EMBL" id="AY032733">
    <property type="protein sequence ID" value="AAK39633.1"/>
    <property type="molecule type" value="Genomic_DNA"/>
</dbReference>
<dbReference type="RefSeq" id="WP_048776360.1">
    <property type="nucleotide sequence ID" value="NZ_LAVY01000012.1"/>
</dbReference>
<dbReference type="SMR" id="Q93M42"/>
<dbReference type="ESTHER" id="strgo-Q93M42">
    <property type="family name" value="Lactobacillus_peptidase"/>
</dbReference>
<dbReference type="SABIO-RK" id="Q93M42"/>
<dbReference type="GO" id="GO:0005737">
    <property type="term" value="C:cytoplasm"/>
    <property type="evidence" value="ECO:0007669"/>
    <property type="project" value="UniProtKB-UniRule"/>
</dbReference>
<dbReference type="GO" id="GO:0005576">
    <property type="term" value="C:extracellular region"/>
    <property type="evidence" value="ECO:0007669"/>
    <property type="project" value="UniProtKB-SubCell"/>
</dbReference>
<dbReference type="GO" id="GO:0004177">
    <property type="term" value="F:aminopeptidase activity"/>
    <property type="evidence" value="ECO:0007669"/>
    <property type="project" value="UniProtKB-KW"/>
</dbReference>
<dbReference type="GO" id="GO:0008239">
    <property type="term" value="F:dipeptidyl-peptidase activity"/>
    <property type="evidence" value="ECO:0007669"/>
    <property type="project" value="UniProtKB-UniRule"/>
</dbReference>
<dbReference type="GO" id="GO:0008236">
    <property type="term" value="F:serine-type peptidase activity"/>
    <property type="evidence" value="ECO:0007669"/>
    <property type="project" value="UniProtKB-KW"/>
</dbReference>
<dbReference type="GO" id="GO:0006508">
    <property type="term" value="P:proteolysis"/>
    <property type="evidence" value="ECO:0007669"/>
    <property type="project" value="UniProtKB-KW"/>
</dbReference>
<dbReference type="Gene3D" id="1.10.246.70">
    <property type="match status" value="1"/>
</dbReference>
<dbReference type="Gene3D" id="3.40.50.1820">
    <property type="entry name" value="alpha/beta hydrolase"/>
    <property type="match status" value="1"/>
</dbReference>
<dbReference type="Gene3D" id="2.60.120.260">
    <property type="entry name" value="Galactose-binding domain-like"/>
    <property type="match status" value="1"/>
</dbReference>
<dbReference type="HAMAP" id="MF_00698">
    <property type="entry name" value="Aminopeptidase_S15"/>
    <property type="match status" value="1"/>
</dbReference>
<dbReference type="InterPro" id="IPR029058">
    <property type="entry name" value="AB_hydrolase_fold"/>
</dbReference>
<dbReference type="InterPro" id="IPR008979">
    <property type="entry name" value="Galactose-bd-like_sf"/>
</dbReference>
<dbReference type="InterPro" id="IPR008252">
    <property type="entry name" value="Pept_S15_Xpro"/>
</dbReference>
<dbReference type="InterPro" id="IPR015251">
    <property type="entry name" value="PepX_N_dom"/>
</dbReference>
<dbReference type="InterPro" id="IPR036313">
    <property type="entry name" value="PepX_N_dom_sf"/>
</dbReference>
<dbReference type="InterPro" id="IPR000383">
    <property type="entry name" value="Xaa-Pro-like_dom"/>
</dbReference>
<dbReference type="InterPro" id="IPR013736">
    <property type="entry name" value="Xaa-Pro_dipept_C"/>
</dbReference>
<dbReference type="InterPro" id="IPR050585">
    <property type="entry name" value="Xaa-Pro_dipeptidyl-ppase/CocE"/>
</dbReference>
<dbReference type="NCBIfam" id="NF003783">
    <property type="entry name" value="PRK05371.1-4"/>
    <property type="match status" value="1"/>
</dbReference>
<dbReference type="PANTHER" id="PTHR43056:SF10">
    <property type="entry name" value="COCE_NOND FAMILY, PUTATIVE (AFU_ORTHOLOGUE AFUA_7G00600)-RELATED"/>
    <property type="match status" value="1"/>
</dbReference>
<dbReference type="PANTHER" id="PTHR43056">
    <property type="entry name" value="PEPTIDASE S9 PROLYL OLIGOPEPTIDASE"/>
    <property type="match status" value="1"/>
</dbReference>
<dbReference type="Pfam" id="PF02129">
    <property type="entry name" value="Peptidase_S15"/>
    <property type="match status" value="1"/>
</dbReference>
<dbReference type="Pfam" id="PF08530">
    <property type="entry name" value="PepX_C"/>
    <property type="match status" value="1"/>
</dbReference>
<dbReference type="Pfam" id="PF09168">
    <property type="entry name" value="PepX_N"/>
    <property type="match status" value="1"/>
</dbReference>
<dbReference type="PRINTS" id="PR00923">
    <property type="entry name" value="LACTOPTASE"/>
</dbReference>
<dbReference type="SMART" id="SM00939">
    <property type="entry name" value="PepX_C"/>
    <property type="match status" value="1"/>
</dbReference>
<dbReference type="SMART" id="SM00940">
    <property type="entry name" value="PepX_N"/>
    <property type="match status" value="1"/>
</dbReference>
<dbReference type="SUPFAM" id="SSF53474">
    <property type="entry name" value="alpha/beta-Hydrolases"/>
    <property type="match status" value="1"/>
</dbReference>
<dbReference type="SUPFAM" id="SSF49785">
    <property type="entry name" value="Galactose-binding domain-like"/>
    <property type="match status" value="1"/>
</dbReference>
<dbReference type="SUPFAM" id="SSF81761">
    <property type="entry name" value="X-Prolyl dipeptidyl aminopeptidase PepX, N-terminal domain"/>
    <property type="match status" value="1"/>
</dbReference>